<name>SYC_THEFY</name>
<dbReference type="EC" id="6.1.1.16" evidence="1"/>
<dbReference type="EMBL" id="CP000088">
    <property type="protein sequence ID" value="AAZ54250.1"/>
    <property type="molecule type" value="Genomic_DNA"/>
</dbReference>
<dbReference type="RefSeq" id="WP_011290659.1">
    <property type="nucleotide sequence ID" value="NC_007333.1"/>
</dbReference>
<dbReference type="SMR" id="Q47TG4"/>
<dbReference type="STRING" id="269800.Tfu_0212"/>
<dbReference type="KEGG" id="tfu:Tfu_0212"/>
<dbReference type="eggNOG" id="COG0215">
    <property type="taxonomic scope" value="Bacteria"/>
</dbReference>
<dbReference type="HOGENOM" id="CLU_013528_0_1_11"/>
<dbReference type="OrthoDB" id="9815130at2"/>
<dbReference type="GO" id="GO:0005829">
    <property type="term" value="C:cytosol"/>
    <property type="evidence" value="ECO:0007669"/>
    <property type="project" value="TreeGrafter"/>
</dbReference>
<dbReference type="GO" id="GO:0005524">
    <property type="term" value="F:ATP binding"/>
    <property type="evidence" value="ECO:0007669"/>
    <property type="project" value="UniProtKB-UniRule"/>
</dbReference>
<dbReference type="GO" id="GO:0004817">
    <property type="term" value="F:cysteine-tRNA ligase activity"/>
    <property type="evidence" value="ECO:0007669"/>
    <property type="project" value="UniProtKB-UniRule"/>
</dbReference>
<dbReference type="GO" id="GO:0008270">
    <property type="term" value="F:zinc ion binding"/>
    <property type="evidence" value="ECO:0007669"/>
    <property type="project" value="UniProtKB-UniRule"/>
</dbReference>
<dbReference type="GO" id="GO:0006423">
    <property type="term" value="P:cysteinyl-tRNA aminoacylation"/>
    <property type="evidence" value="ECO:0007669"/>
    <property type="project" value="UniProtKB-UniRule"/>
</dbReference>
<dbReference type="CDD" id="cd00672">
    <property type="entry name" value="CysRS_core"/>
    <property type="match status" value="1"/>
</dbReference>
<dbReference type="FunFam" id="3.40.50.620:FF:000068">
    <property type="entry name" value="Cysteine--tRNA ligase"/>
    <property type="match status" value="1"/>
</dbReference>
<dbReference type="Gene3D" id="1.20.120.1910">
    <property type="entry name" value="Cysteine-tRNA ligase, C-terminal anti-codon recognition domain"/>
    <property type="match status" value="1"/>
</dbReference>
<dbReference type="Gene3D" id="3.40.50.620">
    <property type="entry name" value="HUPs"/>
    <property type="match status" value="1"/>
</dbReference>
<dbReference type="HAMAP" id="MF_00041">
    <property type="entry name" value="Cys_tRNA_synth"/>
    <property type="match status" value="1"/>
</dbReference>
<dbReference type="InterPro" id="IPR015803">
    <property type="entry name" value="Cys-tRNA-ligase"/>
</dbReference>
<dbReference type="InterPro" id="IPR015273">
    <property type="entry name" value="Cys-tRNA-synt_Ia_DALR"/>
</dbReference>
<dbReference type="InterPro" id="IPR024909">
    <property type="entry name" value="Cys-tRNA/MSH_ligase"/>
</dbReference>
<dbReference type="InterPro" id="IPR056411">
    <property type="entry name" value="CysS_C"/>
</dbReference>
<dbReference type="InterPro" id="IPR014729">
    <property type="entry name" value="Rossmann-like_a/b/a_fold"/>
</dbReference>
<dbReference type="InterPro" id="IPR032678">
    <property type="entry name" value="tRNA-synt_1_cat_dom"/>
</dbReference>
<dbReference type="InterPro" id="IPR009080">
    <property type="entry name" value="tRNAsynth_Ia_anticodon-bd"/>
</dbReference>
<dbReference type="NCBIfam" id="TIGR00435">
    <property type="entry name" value="cysS"/>
    <property type="match status" value="1"/>
</dbReference>
<dbReference type="PANTHER" id="PTHR10890:SF30">
    <property type="entry name" value="CYSTEINE--TRNA LIGASE"/>
    <property type="match status" value="1"/>
</dbReference>
<dbReference type="PANTHER" id="PTHR10890">
    <property type="entry name" value="CYSTEINYL-TRNA SYNTHETASE"/>
    <property type="match status" value="1"/>
</dbReference>
<dbReference type="Pfam" id="PF23493">
    <property type="entry name" value="CysS_C"/>
    <property type="match status" value="1"/>
</dbReference>
<dbReference type="Pfam" id="PF09190">
    <property type="entry name" value="DALR_2"/>
    <property type="match status" value="1"/>
</dbReference>
<dbReference type="Pfam" id="PF01406">
    <property type="entry name" value="tRNA-synt_1e"/>
    <property type="match status" value="1"/>
</dbReference>
<dbReference type="PRINTS" id="PR00983">
    <property type="entry name" value="TRNASYNTHCYS"/>
</dbReference>
<dbReference type="SMART" id="SM00840">
    <property type="entry name" value="DALR_2"/>
    <property type="match status" value="1"/>
</dbReference>
<dbReference type="SUPFAM" id="SSF47323">
    <property type="entry name" value="Anticodon-binding domain of a subclass of class I aminoacyl-tRNA synthetases"/>
    <property type="match status" value="1"/>
</dbReference>
<dbReference type="SUPFAM" id="SSF52374">
    <property type="entry name" value="Nucleotidylyl transferase"/>
    <property type="match status" value="1"/>
</dbReference>
<evidence type="ECO:0000255" key="1">
    <source>
        <dbReference type="HAMAP-Rule" id="MF_00041"/>
    </source>
</evidence>
<proteinExistence type="inferred from homology"/>
<keyword id="KW-0030">Aminoacyl-tRNA synthetase</keyword>
<keyword id="KW-0067">ATP-binding</keyword>
<keyword id="KW-0963">Cytoplasm</keyword>
<keyword id="KW-0436">Ligase</keyword>
<keyword id="KW-0479">Metal-binding</keyword>
<keyword id="KW-0547">Nucleotide-binding</keyword>
<keyword id="KW-0648">Protein biosynthesis</keyword>
<keyword id="KW-0862">Zinc</keyword>
<sequence>MSLRFYDTRTRQVRDFVPLREGCVSLYLCGATVQAPPHIGHIRSGVSFDILRRWLMYRGYRVIFCRNVTDIDDKILNVAASEGVQWWEVSERNYRAFAEAYDTLGCLPPTVEPRATGHIPEMIELMRRLIDRGHAYVAEDGSGDVYFDVTSYAEYGSLSNQRLEEMRAAEDGDARAKRDPRDFALWKGARPGEPSWPTPWGPGRPGWHLECSAMATKYLGPTFDIHGGGVDLVFPHHENESAQSRAAGDGFARYWLHNGLLTTGGEKMSKSLGNSLLIPEITRRVRPVELRYYLGQAHYRSNLDYSEESLREAASAYQRLENFLVRVNEIAGPIPDDVPVPEEFAAALDDDLGVPQALAVAHNHVREGNSALAEGAKERAAQIGARLRAMLAVLGLDPLSPQWAGSDDSGLHDVVDSLVSVVLEQRQEARKRKDYATADRIRDQLAEMGIAVEDTPQGPRWELKRS</sequence>
<organism>
    <name type="scientific">Thermobifida fusca (strain YX)</name>
    <dbReference type="NCBI Taxonomy" id="269800"/>
    <lineage>
        <taxon>Bacteria</taxon>
        <taxon>Bacillati</taxon>
        <taxon>Actinomycetota</taxon>
        <taxon>Actinomycetes</taxon>
        <taxon>Streptosporangiales</taxon>
        <taxon>Nocardiopsidaceae</taxon>
        <taxon>Thermobifida</taxon>
    </lineage>
</organism>
<comment type="catalytic activity">
    <reaction evidence="1">
        <text>tRNA(Cys) + L-cysteine + ATP = L-cysteinyl-tRNA(Cys) + AMP + diphosphate</text>
        <dbReference type="Rhea" id="RHEA:17773"/>
        <dbReference type="Rhea" id="RHEA-COMP:9661"/>
        <dbReference type="Rhea" id="RHEA-COMP:9679"/>
        <dbReference type="ChEBI" id="CHEBI:30616"/>
        <dbReference type="ChEBI" id="CHEBI:33019"/>
        <dbReference type="ChEBI" id="CHEBI:35235"/>
        <dbReference type="ChEBI" id="CHEBI:78442"/>
        <dbReference type="ChEBI" id="CHEBI:78517"/>
        <dbReference type="ChEBI" id="CHEBI:456215"/>
        <dbReference type="EC" id="6.1.1.16"/>
    </reaction>
</comment>
<comment type="cofactor">
    <cofactor evidence="1">
        <name>Zn(2+)</name>
        <dbReference type="ChEBI" id="CHEBI:29105"/>
    </cofactor>
    <text evidence="1">Binds 1 zinc ion per subunit.</text>
</comment>
<comment type="subunit">
    <text evidence="1">Monomer.</text>
</comment>
<comment type="subcellular location">
    <subcellularLocation>
        <location evidence="1">Cytoplasm</location>
    </subcellularLocation>
</comment>
<comment type="similarity">
    <text evidence="1">Belongs to the class-I aminoacyl-tRNA synthetase family.</text>
</comment>
<reference key="1">
    <citation type="journal article" date="2007" name="J. Bacteriol.">
        <title>Genome sequence and analysis of the soil cellulolytic actinomycete Thermobifida fusca YX.</title>
        <authorList>
            <person name="Lykidis A."/>
            <person name="Mavromatis K."/>
            <person name="Ivanova N."/>
            <person name="Anderson I."/>
            <person name="Land M."/>
            <person name="DiBartolo G."/>
            <person name="Martinez M."/>
            <person name="Lapidus A."/>
            <person name="Lucas S."/>
            <person name="Copeland A."/>
            <person name="Richardson P."/>
            <person name="Wilson D.B."/>
            <person name="Kyrpides N."/>
        </authorList>
    </citation>
    <scope>NUCLEOTIDE SEQUENCE [LARGE SCALE GENOMIC DNA]</scope>
    <source>
        <strain>YX</strain>
    </source>
</reference>
<protein>
    <recommendedName>
        <fullName evidence="1">Cysteine--tRNA ligase</fullName>
        <ecNumber evidence="1">6.1.1.16</ecNumber>
    </recommendedName>
    <alternativeName>
        <fullName evidence="1">Cysteinyl-tRNA synthetase</fullName>
        <shortName evidence="1">CysRS</shortName>
    </alternativeName>
</protein>
<feature type="chain" id="PRO_0000240969" description="Cysteine--tRNA ligase">
    <location>
        <begin position="1"/>
        <end position="466"/>
    </location>
</feature>
<feature type="short sequence motif" description="'HIGH' region">
    <location>
        <begin position="31"/>
        <end position="41"/>
    </location>
</feature>
<feature type="short sequence motif" description="'KMSKS' region">
    <location>
        <begin position="267"/>
        <end position="271"/>
    </location>
</feature>
<feature type="binding site" evidence="1">
    <location>
        <position position="29"/>
    </location>
    <ligand>
        <name>Zn(2+)</name>
        <dbReference type="ChEBI" id="CHEBI:29105"/>
    </ligand>
</feature>
<feature type="binding site" evidence="1">
    <location>
        <position position="211"/>
    </location>
    <ligand>
        <name>Zn(2+)</name>
        <dbReference type="ChEBI" id="CHEBI:29105"/>
    </ligand>
</feature>
<feature type="binding site" evidence="1">
    <location>
        <position position="236"/>
    </location>
    <ligand>
        <name>Zn(2+)</name>
        <dbReference type="ChEBI" id="CHEBI:29105"/>
    </ligand>
</feature>
<feature type="binding site" evidence="1">
    <location>
        <position position="240"/>
    </location>
    <ligand>
        <name>Zn(2+)</name>
        <dbReference type="ChEBI" id="CHEBI:29105"/>
    </ligand>
</feature>
<feature type="binding site" evidence="1">
    <location>
        <position position="270"/>
    </location>
    <ligand>
        <name>ATP</name>
        <dbReference type="ChEBI" id="CHEBI:30616"/>
    </ligand>
</feature>
<accession>Q47TG4</accession>
<gene>
    <name evidence="1" type="primary">cysS</name>
    <name type="ordered locus">Tfu_0212</name>
</gene>